<gene>
    <name evidence="1" type="primary">mpa</name>
    <name type="ordered locus">Mvan_3458</name>
</gene>
<proteinExistence type="inferred from homology"/>
<keyword id="KW-0067">ATP-binding</keyword>
<keyword id="KW-0143">Chaperone</keyword>
<keyword id="KW-0175">Coiled coil</keyword>
<keyword id="KW-0547">Nucleotide-binding</keyword>
<keyword id="KW-0647">Proteasome</keyword>
<organism>
    <name type="scientific">Mycolicibacterium vanbaalenii (strain DSM 7251 / JCM 13017 / BCRC 16820 / KCTC 9966 / NRRL B-24157 / PYR-1)</name>
    <name type="common">Mycobacterium vanbaalenii</name>
    <dbReference type="NCBI Taxonomy" id="350058"/>
    <lineage>
        <taxon>Bacteria</taxon>
        <taxon>Bacillati</taxon>
        <taxon>Actinomycetota</taxon>
        <taxon>Actinomycetes</taxon>
        <taxon>Mycobacteriales</taxon>
        <taxon>Mycobacteriaceae</taxon>
        <taxon>Mycolicibacterium</taxon>
    </lineage>
</organism>
<feature type="chain" id="PRO_0000397007" description="Proteasome-associated ATPase">
    <location>
        <begin position="1"/>
        <end position="615"/>
    </location>
</feature>
<feature type="region of interest" description="Disordered" evidence="2">
    <location>
        <begin position="1"/>
        <end position="27"/>
    </location>
</feature>
<feature type="region of interest" description="Docks into pockets in the proteasome alpha-ring" evidence="1">
    <location>
        <begin position="614"/>
        <end position="615"/>
    </location>
</feature>
<feature type="coiled-coil region" evidence="1">
    <location>
        <begin position="22"/>
        <end position="99"/>
    </location>
</feature>
<feature type="binding site" evidence="1">
    <location>
        <begin position="302"/>
        <end position="307"/>
    </location>
    <ligand>
        <name>ATP</name>
        <dbReference type="ChEBI" id="CHEBI:30616"/>
    </ligand>
</feature>
<comment type="function">
    <text evidence="1">ATPase which is responsible for recognizing, binding, unfolding and translocation of pupylated proteins into the bacterial 20S proteasome core particle. May be essential for opening the gate of the 20S proteasome via an interaction with its C-terminus, thereby allowing substrate entry and access to the site of proteolysis. Thus, the C-termini of the proteasomal ATPase may function like a 'key in a lock' to induce gate opening and therefore regulate proteolysis.</text>
</comment>
<comment type="pathway">
    <text evidence="1">Protein degradation; proteasomal Pup-dependent pathway.</text>
</comment>
<comment type="subunit">
    <text evidence="1">Homohexamer. Assembles into a hexameric ring structure that caps the 20S proteasome core. Strongly interacts with the prokaryotic ubiquitin-like protein Pup through a hydrophobic interface; the interacting region of ARC lies in its N-terminal coiled-coil domain. There is one Pup binding site per ARC hexamer ring. Upon ATP-binding, the C-terminus of ARC interacts with the alpha-rings of the proteasome core, possibly by binding to the intersubunit pockets.</text>
</comment>
<comment type="domain">
    <text evidence="1">Consists of three main regions, an N-terminal coiled-coil domain that binds to protein Pup and functions as a docking station, an interdomain involved in ARC hexamerization, and a C-terminal ATPase domain of the AAA type.</text>
</comment>
<comment type="similarity">
    <text evidence="1">Belongs to the AAA ATPase family.</text>
</comment>
<sequence length="615" mass="68423">MSESERSEASEVFGTSPDSRLSSEDAAELEQLRREAAILREQLEDAGGLATSARAARDVHQLEARIDSLAARNAKLMDTLKEARQQLLALREEVDRLGQPPSGYGVLLSVQDDETVDVFTSGRKMRLTCSPNIETKELKKGQTVRLNEALTVVEAGHFESVGEISTLREILSDGHRALVVGHADEERIVWLAEPLVAAEHLPEGSYADEDDLTDDRPRKLRPGDSLLVDTKAGYAFERIPKAEVEDLVLEEVPDVSYNDIGGLGRQIEQIRDAVELPFLHKELYREYSLRPPKGVLLYGPPGCGKTLIAKAVANSLAKKMAEVRGDDAREAKSYFLNIKGPELLNKFVGETERHIRLIFQRAREKASEGTPVIVFFDEMDSIFRTRGTGVSSDVETTVVPQLLSEIDGVEGLENVIVIGASNREDMIDPAILRPGRLDVKIKIERPDAESAQDIFSKYLTEELPIHDDDLAEFSGDRSLTIKAMIEKVVDRMYAEIDDNRFLEVTYANGDKEVMYFKDFNSGAMIQNVVDRAKKNAIKAVLETGQRGLRIQHLLDSIIDEFAENEDLPNTTNPDDWARISGKKGERIVYIRTLVTGKSSSASRAIDTESNLGQYL</sequence>
<name>ARC_MYCVP</name>
<evidence type="ECO:0000255" key="1">
    <source>
        <dbReference type="HAMAP-Rule" id="MF_02112"/>
    </source>
</evidence>
<evidence type="ECO:0000256" key="2">
    <source>
        <dbReference type="SAM" id="MobiDB-lite"/>
    </source>
</evidence>
<reference key="1">
    <citation type="submission" date="2006-12" db="EMBL/GenBank/DDBJ databases">
        <title>Complete sequence of Mycobacterium vanbaalenii PYR-1.</title>
        <authorList>
            <consortium name="US DOE Joint Genome Institute"/>
            <person name="Copeland A."/>
            <person name="Lucas S."/>
            <person name="Lapidus A."/>
            <person name="Barry K."/>
            <person name="Detter J.C."/>
            <person name="Glavina del Rio T."/>
            <person name="Hammon N."/>
            <person name="Israni S."/>
            <person name="Dalin E."/>
            <person name="Tice H."/>
            <person name="Pitluck S."/>
            <person name="Singan V."/>
            <person name="Schmutz J."/>
            <person name="Larimer F."/>
            <person name="Land M."/>
            <person name="Hauser L."/>
            <person name="Kyrpides N."/>
            <person name="Anderson I.J."/>
            <person name="Miller C."/>
            <person name="Richardson P."/>
        </authorList>
    </citation>
    <scope>NUCLEOTIDE SEQUENCE [LARGE SCALE GENOMIC DNA]</scope>
    <source>
        <strain>DSM 7251 / JCM 13017 / BCRC 16820 / KCTC 9966 / NRRL B-24157 / PYR-1</strain>
    </source>
</reference>
<dbReference type="EMBL" id="CP000511">
    <property type="protein sequence ID" value="ABM14253.1"/>
    <property type="molecule type" value="Genomic_DNA"/>
</dbReference>
<dbReference type="SMR" id="A1TAQ3"/>
<dbReference type="STRING" id="350058.Mvan_3458"/>
<dbReference type="KEGG" id="mva:Mvan_3458"/>
<dbReference type="eggNOG" id="COG1222">
    <property type="taxonomic scope" value="Bacteria"/>
</dbReference>
<dbReference type="HOGENOM" id="CLU_036054_0_0_11"/>
<dbReference type="UniPathway" id="UPA00997"/>
<dbReference type="Proteomes" id="UP000009159">
    <property type="component" value="Chromosome"/>
</dbReference>
<dbReference type="GO" id="GO:0000502">
    <property type="term" value="C:proteasome complex"/>
    <property type="evidence" value="ECO:0007669"/>
    <property type="project" value="UniProtKB-KW"/>
</dbReference>
<dbReference type="GO" id="GO:0005524">
    <property type="term" value="F:ATP binding"/>
    <property type="evidence" value="ECO:0007669"/>
    <property type="project" value="UniProtKB-UniRule"/>
</dbReference>
<dbReference type="GO" id="GO:0016887">
    <property type="term" value="F:ATP hydrolysis activity"/>
    <property type="evidence" value="ECO:0007669"/>
    <property type="project" value="UniProtKB-UniRule"/>
</dbReference>
<dbReference type="GO" id="GO:0019941">
    <property type="term" value="P:modification-dependent protein catabolic process"/>
    <property type="evidence" value="ECO:0007669"/>
    <property type="project" value="InterPro"/>
</dbReference>
<dbReference type="GO" id="GO:0010498">
    <property type="term" value="P:proteasomal protein catabolic process"/>
    <property type="evidence" value="ECO:0007669"/>
    <property type="project" value="InterPro"/>
</dbReference>
<dbReference type="FunFam" id="1.20.5.170:FF:000018">
    <property type="entry name" value="AAA ATPase forming ring-shaped complexes"/>
    <property type="match status" value="1"/>
</dbReference>
<dbReference type="FunFam" id="2.40.50.140:FF:000169">
    <property type="entry name" value="AAA ATPase forming ring-shaped complexes"/>
    <property type="match status" value="1"/>
</dbReference>
<dbReference type="FunFam" id="3.40.50.300:FF:000155">
    <property type="entry name" value="AAA ATPase forming ring-shaped complexes"/>
    <property type="match status" value="1"/>
</dbReference>
<dbReference type="Gene3D" id="1.10.8.60">
    <property type="match status" value="1"/>
</dbReference>
<dbReference type="Gene3D" id="1.20.5.170">
    <property type="match status" value="1"/>
</dbReference>
<dbReference type="Gene3D" id="2.40.50.140">
    <property type="entry name" value="Nucleic acid-binding proteins"/>
    <property type="match status" value="2"/>
</dbReference>
<dbReference type="Gene3D" id="3.40.50.300">
    <property type="entry name" value="P-loop containing nucleotide triphosphate hydrolases"/>
    <property type="match status" value="1"/>
</dbReference>
<dbReference type="HAMAP" id="MF_02112">
    <property type="entry name" value="ARC_ATPase"/>
    <property type="match status" value="1"/>
</dbReference>
<dbReference type="InterPro" id="IPR003593">
    <property type="entry name" value="AAA+_ATPase"/>
</dbReference>
<dbReference type="InterPro" id="IPR050168">
    <property type="entry name" value="AAA_ATPase_domain"/>
</dbReference>
<dbReference type="InterPro" id="IPR003959">
    <property type="entry name" value="ATPase_AAA_core"/>
</dbReference>
<dbReference type="InterPro" id="IPR003960">
    <property type="entry name" value="ATPase_AAA_CS"/>
</dbReference>
<dbReference type="InterPro" id="IPR012340">
    <property type="entry name" value="NA-bd_OB-fold"/>
</dbReference>
<dbReference type="InterPro" id="IPR027417">
    <property type="entry name" value="P-loop_NTPase"/>
</dbReference>
<dbReference type="InterPro" id="IPR032501">
    <property type="entry name" value="Prot_ATP_ID_OB_2nd"/>
</dbReference>
<dbReference type="InterPro" id="IPR041626">
    <property type="entry name" value="Prot_ATP_ID_OB_N"/>
</dbReference>
<dbReference type="InterPro" id="IPR022482">
    <property type="entry name" value="Proteasome_ATPase"/>
</dbReference>
<dbReference type="NCBIfam" id="TIGR03689">
    <property type="entry name" value="pup_AAA"/>
    <property type="match status" value="1"/>
</dbReference>
<dbReference type="PANTHER" id="PTHR23077">
    <property type="entry name" value="AAA-FAMILY ATPASE"/>
    <property type="match status" value="1"/>
</dbReference>
<dbReference type="PANTHER" id="PTHR23077:SF144">
    <property type="entry name" value="PROTEASOME-ASSOCIATED ATPASE"/>
    <property type="match status" value="1"/>
</dbReference>
<dbReference type="Pfam" id="PF00004">
    <property type="entry name" value="AAA"/>
    <property type="match status" value="1"/>
</dbReference>
<dbReference type="Pfam" id="PF16450">
    <property type="entry name" value="Prot_ATP_ID_OB_C"/>
    <property type="match status" value="1"/>
</dbReference>
<dbReference type="Pfam" id="PF17758">
    <property type="entry name" value="Prot_ATP_ID_OB_N"/>
    <property type="match status" value="1"/>
</dbReference>
<dbReference type="SMART" id="SM00382">
    <property type="entry name" value="AAA"/>
    <property type="match status" value="1"/>
</dbReference>
<dbReference type="SUPFAM" id="SSF52540">
    <property type="entry name" value="P-loop containing nucleoside triphosphate hydrolases"/>
    <property type="match status" value="1"/>
</dbReference>
<dbReference type="PROSITE" id="PS00674">
    <property type="entry name" value="AAA"/>
    <property type="match status" value="1"/>
</dbReference>
<accession>A1TAQ3</accession>
<protein>
    <recommendedName>
        <fullName evidence="1">Proteasome-associated ATPase</fullName>
    </recommendedName>
    <alternativeName>
        <fullName evidence="1">AAA ATPase forming ring-shaped complexes</fullName>
        <shortName evidence="1">ARC</shortName>
    </alternativeName>
    <alternativeName>
        <fullName evidence="1">Mycobacterial proteasome ATPase</fullName>
    </alternativeName>
</protein>